<feature type="chain" id="PRO_0000392230" description="Rubredoxin-2">
    <location>
        <begin position="1"/>
        <end position="174"/>
    </location>
</feature>
<feature type="domain" description="Rubredoxin-like 1" evidence="2">
    <location>
        <begin position="1"/>
        <end position="53"/>
    </location>
</feature>
<feature type="domain" description="Rubredoxin-like 2" evidence="2">
    <location>
        <begin position="121"/>
        <end position="172"/>
    </location>
</feature>
<feature type="region of interest" description="Disordered" evidence="3">
    <location>
        <begin position="56"/>
        <end position="115"/>
    </location>
</feature>
<feature type="compositionally biased region" description="Low complexity" evidence="3">
    <location>
        <begin position="56"/>
        <end position="65"/>
    </location>
</feature>
<feature type="compositionally biased region" description="Basic residues" evidence="3">
    <location>
        <begin position="97"/>
        <end position="109"/>
    </location>
</feature>
<feature type="binding site" evidence="2">
    <location>
        <position position="6"/>
    </location>
    <ligand>
        <name>Fe cation</name>
        <dbReference type="ChEBI" id="CHEBI:24875"/>
        <label>1</label>
    </ligand>
</feature>
<feature type="binding site" evidence="2">
    <location>
        <position position="9"/>
    </location>
    <ligand>
        <name>Fe cation</name>
        <dbReference type="ChEBI" id="CHEBI:24875"/>
        <label>1</label>
    </ligand>
</feature>
<feature type="binding site" evidence="2">
    <location>
        <position position="39"/>
    </location>
    <ligand>
        <name>Fe cation</name>
        <dbReference type="ChEBI" id="CHEBI:24875"/>
        <label>1</label>
    </ligand>
</feature>
<feature type="binding site" evidence="2">
    <location>
        <position position="42"/>
    </location>
    <ligand>
        <name>Fe cation</name>
        <dbReference type="ChEBI" id="CHEBI:24875"/>
        <label>1</label>
    </ligand>
</feature>
<feature type="binding site" evidence="2">
    <location>
        <position position="126"/>
    </location>
    <ligand>
        <name>Fe cation</name>
        <dbReference type="ChEBI" id="CHEBI:24875"/>
        <label>2</label>
    </ligand>
</feature>
<feature type="binding site" evidence="2">
    <location>
        <position position="129"/>
    </location>
    <ligand>
        <name>Fe cation</name>
        <dbReference type="ChEBI" id="CHEBI:24875"/>
        <label>2</label>
    </ligand>
</feature>
<feature type="binding site" evidence="2">
    <location>
        <position position="159"/>
    </location>
    <ligand>
        <name>Fe cation</name>
        <dbReference type="ChEBI" id="CHEBI:24875"/>
        <label>2</label>
    </ligand>
</feature>
<feature type="binding site" evidence="2">
    <location>
        <position position="162"/>
    </location>
    <ligand>
        <name>Fe cation</name>
        <dbReference type="ChEBI" id="CHEBI:24875"/>
        <label>2</label>
    </ligand>
</feature>
<reference key="1">
    <citation type="journal article" date="2006" name="Nat. Biotechnol.">
        <title>Genome sequence of the ubiquitous hydrocarbon-degrading marine bacterium Alcanivorax borkumensis.</title>
        <authorList>
            <person name="Schneiker S."/>
            <person name="Martins dos Santos V.A.P."/>
            <person name="Bartels D."/>
            <person name="Bekel T."/>
            <person name="Brecht M."/>
            <person name="Buhrmester J."/>
            <person name="Chernikova T.N."/>
            <person name="Denaro R."/>
            <person name="Ferrer M."/>
            <person name="Gertler C."/>
            <person name="Goesmann A."/>
            <person name="Golyshina O.V."/>
            <person name="Kaminski F."/>
            <person name="Khachane A.N."/>
            <person name="Lang S."/>
            <person name="Linke B."/>
            <person name="McHardy A.C."/>
            <person name="Meyer F."/>
            <person name="Nechitaylo T."/>
            <person name="Puehler A."/>
            <person name="Regenhardt D."/>
            <person name="Rupp O."/>
            <person name="Sabirova J.S."/>
            <person name="Selbitschka W."/>
            <person name="Yakimov M.M."/>
            <person name="Timmis K.N."/>
            <person name="Vorhoelter F.-J."/>
            <person name="Weidner S."/>
            <person name="Kaiser O."/>
            <person name="Golyshin P.N."/>
        </authorList>
    </citation>
    <scope>NUCLEOTIDE SEQUENCE [LARGE SCALE GENOMIC DNA]</scope>
    <source>
        <strain>ATCC 700651 / DSM 11573 / NCIMB 13689 / SK2</strain>
    </source>
</reference>
<evidence type="ECO:0000250" key="1"/>
<evidence type="ECO:0000255" key="2">
    <source>
        <dbReference type="PROSITE-ProRule" id="PRU00241"/>
    </source>
</evidence>
<evidence type="ECO:0000256" key="3">
    <source>
        <dbReference type="SAM" id="MobiDB-lite"/>
    </source>
</evidence>
<evidence type="ECO:0000305" key="4"/>
<name>RUBR2_ALCBS</name>
<proteinExistence type="inferred from homology"/>
<accession>Q0VKZ2</accession>
<keyword id="KW-0963">Cytoplasm</keyword>
<keyword id="KW-0249">Electron transport</keyword>
<keyword id="KW-0408">Iron</keyword>
<keyword id="KW-0479">Metal-binding</keyword>
<keyword id="KW-1185">Reference proteome</keyword>
<keyword id="KW-0677">Repeat</keyword>
<keyword id="KW-0813">Transport</keyword>
<comment type="function">
    <text evidence="1">Involved in the hydrocarbon hydroxylating system, which transfers electrons from NADH to rubredoxin reductase and then through rubredoxin to alkane 1 monooxygenase.</text>
</comment>
<comment type="cofactor">
    <cofactor evidence="1">
        <name>Fe(3+)</name>
        <dbReference type="ChEBI" id="CHEBI:29034"/>
    </cofactor>
    <text evidence="1">Binds 2 Fe(3+) ions per subunit.</text>
</comment>
<comment type="pathway">
    <text>Hydrocarbon metabolism; alkane degradation.</text>
</comment>
<comment type="subcellular location">
    <subcellularLocation>
        <location evidence="1">Cytoplasm</location>
    </subcellularLocation>
</comment>
<comment type="similarity">
    <text evidence="4">Belongs to the rubredoxin family.</text>
</comment>
<gene>
    <name type="primary">alkG</name>
    <name type="ordered locus">ABO_2708</name>
</gene>
<sequence length="174" mass="18665">MAKYQCPDCEYIYDEVAGHPHEGFPPGTSWETIPEEWACPDCAVRDKADFVVIESGSASPASGAATPEVRTATTPPKAEASPQKSTGASTPSANNKAKAKAKAKPARAKSSKDSTGKETTFRKWICITCGHIYDEALGDETEGFAPGTLFEDIPDDWCCPDCGATKEDYVLHED</sequence>
<protein>
    <recommendedName>
        <fullName>Rubredoxin-2</fullName>
        <shortName>Rdxs</shortName>
    </recommendedName>
</protein>
<organism>
    <name type="scientific">Alcanivorax borkumensis (strain ATCC 700651 / DSM 11573 / NCIMB 13689 / SK2)</name>
    <dbReference type="NCBI Taxonomy" id="393595"/>
    <lineage>
        <taxon>Bacteria</taxon>
        <taxon>Pseudomonadati</taxon>
        <taxon>Pseudomonadota</taxon>
        <taxon>Gammaproteobacteria</taxon>
        <taxon>Oceanospirillales</taxon>
        <taxon>Alcanivoracaceae</taxon>
        <taxon>Alcanivorax</taxon>
    </lineage>
</organism>
<dbReference type="EMBL" id="AM286690">
    <property type="protein sequence ID" value="CAL18156.1"/>
    <property type="molecule type" value="Genomic_DNA"/>
</dbReference>
<dbReference type="SMR" id="Q0VKZ2"/>
<dbReference type="STRING" id="393595.ABO_2708"/>
<dbReference type="KEGG" id="abo:ABO_2708"/>
<dbReference type="eggNOG" id="COG1773">
    <property type="taxonomic scope" value="Bacteria"/>
</dbReference>
<dbReference type="HOGENOM" id="CLU_1730536_0_0_6"/>
<dbReference type="OrthoDB" id="9800607at2"/>
<dbReference type="UniPathway" id="UPA00191"/>
<dbReference type="Proteomes" id="UP000008871">
    <property type="component" value="Chromosome"/>
</dbReference>
<dbReference type="GO" id="GO:0005737">
    <property type="term" value="C:cytoplasm"/>
    <property type="evidence" value="ECO:0007669"/>
    <property type="project" value="UniProtKB-SubCell"/>
</dbReference>
<dbReference type="GO" id="GO:0009055">
    <property type="term" value="F:electron transfer activity"/>
    <property type="evidence" value="ECO:0007669"/>
    <property type="project" value="TreeGrafter"/>
</dbReference>
<dbReference type="GO" id="GO:0005506">
    <property type="term" value="F:iron ion binding"/>
    <property type="evidence" value="ECO:0007669"/>
    <property type="project" value="InterPro"/>
</dbReference>
<dbReference type="GO" id="GO:0043448">
    <property type="term" value="P:alkane catabolic process"/>
    <property type="evidence" value="ECO:0007669"/>
    <property type="project" value="UniProtKB-UniPathway"/>
</dbReference>
<dbReference type="CDD" id="cd00730">
    <property type="entry name" value="rubredoxin"/>
    <property type="match status" value="2"/>
</dbReference>
<dbReference type="FunFam" id="2.20.28.10:FF:000001">
    <property type="entry name" value="Rubredoxin"/>
    <property type="match status" value="1"/>
</dbReference>
<dbReference type="Gene3D" id="2.20.28.10">
    <property type="match status" value="2"/>
</dbReference>
<dbReference type="InterPro" id="IPR024934">
    <property type="entry name" value="Rubredoxin-like_dom"/>
</dbReference>
<dbReference type="InterPro" id="IPR024935">
    <property type="entry name" value="Rubredoxin_dom"/>
</dbReference>
<dbReference type="InterPro" id="IPR050526">
    <property type="entry name" value="Rubredoxin_ET"/>
</dbReference>
<dbReference type="InterPro" id="IPR018527">
    <property type="entry name" value="Rubredoxin_Fe_BS"/>
</dbReference>
<dbReference type="PANTHER" id="PTHR47627">
    <property type="entry name" value="RUBREDOXIN"/>
    <property type="match status" value="1"/>
</dbReference>
<dbReference type="PANTHER" id="PTHR47627:SF1">
    <property type="entry name" value="RUBREDOXIN-1-RELATED"/>
    <property type="match status" value="1"/>
</dbReference>
<dbReference type="Pfam" id="PF00301">
    <property type="entry name" value="Rubredoxin"/>
    <property type="match status" value="2"/>
</dbReference>
<dbReference type="PRINTS" id="PR00163">
    <property type="entry name" value="RUBREDOXIN"/>
</dbReference>
<dbReference type="SUPFAM" id="SSF57802">
    <property type="entry name" value="Rubredoxin-like"/>
    <property type="match status" value="2"/>
</dbReference>
<dbReference type="PROSITE" id="PS00202">
    <property type="entry name" value="RUBREDOXIN"/>
    <property type="match status" value="2"/>
</dbReference>
<dbReference type="PROSITE" id="PS50903">
    <property type="entry name" value="RUBREDOXIN_LIKE"/>
    <property type="match status" value="2"/>
</dbReference>